<comment type="function">
    <text evidence="1">Binds specifically to the voltage-gated sodium channel (Nav) and delays its inactivation.</text>
</comment>
<comment type="subcellular location">
    <subcellularLocation>
        <location evidence="4">Secreted</location>
    </subcellularLocation>
    <subcellularLocation>
        <location evidence="4">Nematocyst</location>
    </subcellularLocation>
</comment>
<comment type="toxic dose">
    <text evidence="4">LD(50) is 20 ug/kg to freshwater crabs.</text>
</comment>
<comment type="similarity">
    <text evidence="7">Belongs to the sea anemone sodium channel inhibitory toxin family. Type II subfamily.</text>
</comment>
<accession>D2KX90</accession>
<proteinExistence type="evidence at protein level"/>
<dbReference type="EMBL" id="AB512761">
    <property type="protein sequence ID" value="BAI66462.1"/>
    <property type="molecule type" value="mRNA"/>
</dbReference>
<dbReference type="SMR" id="D2KX90"/>
<dbReference type="GO" id="GO:0005576">
    <property type="term" value="C:extracellular region"/>
    <property type="evidence" value="ECO:0007669"/>
    <property type="project" value="UniProtKB-SubCell"/>
</dbReference>
<dbReference type="GO" id="GO:0042151">
    <property type="term" value="C:nematocyst"/>
    <property type="evidence" value="ECO:0007669"/>
    <property type="project" value="UniProtKB-SubCell"/>
</dbReference>
<dbReference type="GO" id="GO:0017080">
    <property type="term" value="F:sodium channel regulator activity"/>
    <property type="evidence" value="ECO:0007669"/>
    <property type="project" value="UniProtKB-KW"/>
</dbReference>
<dbReference type="GO" id="GO:0090729">
    <property type="term" value="F:toxin activity"/>
    <property type="evidence" value="ECO:0007669"/>
    <property type="project" value="UniProtKB-KW"/>
</dbReference>
<dbReference type="Gene3D" id="2.20.20.10">
    <property type="entry name" value="Anthopleurin-A"/>
    <property type="match status" value="1"/>
</dbReference>
<dbReference type="InterPro" id="IPR023355">
    <property type="entry name" value="Myo_ane_neurotoxin_sf"/>
</dbReference>
<dbReference type="Pfam" id="PF00706">
    <property type="entry name" value="Toxin_4"/>
    <property type="match status" value="1"/>
</dbReference>
<dbReference type="SUPFAM" id="SSF57392">
    <property type="entry name" value="Defensin-like"/>
    <property type="match status" value="1"/>
</dbReference>
<name>NA21_CRYAD</name>
<evidence type="ECO:0000250" key="1"/>
<evidence type="ECO:0000250" key="2">
    <source>
        <dbReference type="UniProtKB" id="P19651"/>
    </source>
</evidence>
<evidence type="ECO:0000255" key="3"/>
<evidence type="ECO:0000269" key="4">
    <source>
    </source>
</evidence>
<evidence type="ECO:0000303" key="5">
    <source>
    </source>
</evidence>
<evidence type="ECO:0000303" key="6">
    <source>
    </source>
</evidence>
<evidence type="ECO:0000305" key="7"/>
<evidence type="ECO:0000312" key="8">
    <source>
        <dbReference type="EMBL" id="BAI66462.1"/>
    </source>
</evidence>
<keyword id="KW-0165">Cleavage on pair of basic residues</keyword>
<keyword id="KW-0903">Direct protein sequencing</keyword>
<keyword id="KW-1015">Disulfide bond</keyword>
<keyword id="KW-0872">Ion channel impairing toxin</keyword>
<keyword id="KW-0166">Nematocyst</keyword>
<keyword id="KW-0528">Neurotoxin</keyword>
<keyword id="KW-0964">Secreted</keyword>
<keyword id="KW-0732">Signal</keyword>
<keyword id="KW-0800">Toxin</keyword>
<keyword id="KW-0738">Voltage-gated sodium channel impairing toxin</keyword>
<organism>
    <name type="scientific">Cryptodendrum adhaesivum</name>
    <name type="common">Adhesive sea anemone</name>
    <dbReference type="NCBI Taxonomy" id="659513"/>
    <lineage>
        <taxon>Eukaryota</taxon>
        <taxon>Metazoa</taxon>
        <taxon>Cnidaria</taxon>
        <taxon>Anthozoa</taxon>
        <taxon>Hexacorallia</taxon>
        <taxon>Actiniaria</taxon>
        <taxon>Nynantheae</taxon>
        <taxon>Thalassianthidae</taxon>
        <taxon>Cryptodendrum</taxon>
    </lineage>
</organism>
<sequence>MAYLKIVLVALMLVLAVSAMRRPDQQDQDISVAKRVACKCDDDGPDVRSATFTGTVDLGSCNSGWEKCASYYTVIADCCRKPRG</sequence>
<reference key="1">
    <citation type="journal article" date="2010" name="Comp. Biochem. Physiol.">
        <title>Isolation and cDNA cloning of type 2 sodium channel peptide toxins from three species of sea anemones (Cryptodendrum adhaesivum, Heterodactyla hemprichii and Thalassianthus aster) belonging to the family Thalassianthidae.</title>
        <authorList>
            <person name="Maeda M."/>
            <person name="Honma T."/>
            <person name="Shiomi K."/>
        </authorList>
    </citation>
    <scope>NUCLEOTIDE SEQUENCE [MRNA]</scope>
    <scope>PROTEIN SEQUENCE OF 36-60</scope>
    <scope>SUBCELLULAR LOCATION</scope>
    <scope>TOXIC DOSE</scope>
</reference>
<reference key="2">
    <citation type="journal article" date="2012" name="Toxicon">
        <title>Development of a rational nomenclature for naming peptide and protein toxins from sea anemones.</title>
        <authorList>
            <person name="Oliveira J.S."/>
            <person name="Fuentes-Silva D."/>
            <person name="King G.F."/>
        </authorList>
    </citation>
    <scope>NOMENCLATURE</scope>
</reference>
<feature type="signal peptide" evidence="3">
    <location>
        <begin position="1"/>
        <end position="19"/>
    </location>
</feature>
<feature type="propeptide" id="PRO_0000404205" evidence="4">
    <location>
        <begin position="20"/>
        <end position="33"/>
    </location>
</feature>
<feature type="chain" id="PRO_0000404206" description="Delta-thalatoxin-Cad1a">
    <location>
        <begin position="36"/>
        <end position="84"/>
    </location>
</feature>
<feature type="disulfide bond" evidence="2">
    <location>
        <begin position="38"/>
        <end position="78"/>
    </location>
</feature>
<feature type="disulfide bond" evidence="2">
    <location>
        <begin position="40"/>
        <end position="68"/>
    </location>
</feature>
<feature type="disulfide bond" evidence="2">
    <location>
        <begin position="61"/>
        <end position="79"/>
    </location>
</feature>
<protein>
    <recommendedName>
        <fullName evidence="6">Delta-thalatoxin-Cad1a</fullName>
        <shortName evidence="6">Delta-TATX-Cad1a</shortName>
    </recommendedName>
    <alternativeName>
        <fullName evidence="8">Ca I</fullName>
    </alternativeName>
    <alternativeName>
        <fullName evidence="5">Delta-thalatoxin-Ca1a</fullName>
        <shortName evidence="5">Delta-TLTX-Ca1a</shortName>
    </alternativeName>
</protein>